<protein>
    <recommendedName>
        <fullName evidence="2">Large ribosomal subunit protein bL19</fullName>
    </recommendedName>
    <alternativeName>
        <fullName>50S ribosomal protein L19</fullName>
    </alternativeName>
</protein>
<name>RL19_MYCLE</name>
<gene>
    <name type="primary">rplS</name>
    <name type="ordered locus">ML1613</name>
    <name type="ORF">MLCB250.38</name>
</gene>
<proteinExistence type="inferred from homology"/>
<evidence type="ECO:0000250" key="1"/>
<evidence type="ECO:0000305" key="2"/>
<feature type="chain" id="PRO_0000163487" description="Large ribosomal subunit protein bL19">
    <location>
        <begin position="1"/>
        <end position="113"/>
    </location>
</feature>
<accession>O33020</accession>
<reference key="1">
    <citation type="journal article" date="2001" name="Nature">
        <title>Massive gene decay in the leprosy bacillus.</title>
        <authorList>
            <person name="Cole S.T."/>
            <person name="Eiglmeier K."/>
            <person name="Parkhill J."/>
            <person name="James K.D."/>
            <person name="Thomson N.R."/>
            <person name="Wheeler P.R."/>
            <person name="Honore N."/>
            <person name="Garnier T."/>
            <person name="Churcher C.M."/>
            <person name="Harris D.E."/>
            <person name="Mungall K.L."/>
            <person name="Basham D."/>
            <person name="Brown D."/>
            <person name="Chillingworth T."/>
            <person name="Connor R."/>
            <person name="Davies R.M."/>
            <person name="Devlin K."/>
            <person name="Duthoy S."/>
            <person name="Feltwell T."/>
            <person name="Fraser A."/>
            <person name="Hamlin N."/>
            <person name="Holroyd S."/>
            <person name="Hornsby T."/>
            <person name="Jagels K."/>
            <person name="Lacroix C."/>
            <person name="Maclean J."/>
            <person name="Moule S."/>
            <person name="Murphy L.D."/>
            <person name="Oliver K."/>
            <person name="Quail M.A."/>
            <person name="Rajandream M.A."/>
            <person name="Rutherford K.M."/>
            <person name="Rutter S."/>
            <person name="Seeger K."/>
            <person name="Simon S."/>
            <person name="Simmonds M."/>
            <person name="Skelton J."/>
            <person name="Squares R."/>
            <person name="Squares S."/>
            <person name="Stevens K."/>
            <person name="Taylor K."/>
            <person name="Whitehead S."/>
            <person name="Woodward J.R."/>
            <person name="Barrell B.G."/>
        </authorList>
    </citation>
    <scope>NUCLEOTIDE SEQUENCE [LARGE SCALE GENOMIC DNA]</scope>
    <source>
        <strain>TN</strain>
    </source>
</reference>
<comment type="function">
    <text evidence="1">This protein is located at the 30S-50S ribosomal subunit interface and may play a role in the structure and function of the aminoacyl-tRNA binding site.</text>
</comment>
<comment type="similarity">
    <text evidence="2">Belongs to the bacterial ribosomal protein bL19 family.</text>
</comment>
<dbReference type="EMBL" id="Z97369">
    <property type="protein sequence ID" value="CAB10632.1"/>
    <property type="molecule type" value="Genomic_DNA"/>
</dbReference>
<dbReference type="EMBL" id="AL583922">
    <property type="protein sequence ID" value="CAC30564.1"/>
    <property type="molecule type" value="Genomic_DNA"/>
</dbReference>
<dbReference type="PIR" id="G87110">
    <property type="entry name" value="G87110"/>
</dbReference>
<dbReference type="RefSeq" id="NP_302112.1">
    <property type="nucleotide sequence ID" value="NC_002677.1"/>
</dbReference>
<dbReference type="RefSeq" id="WP_010908433.1">
    <property type="nucleotide sequence ID" value="NC_002677.1"/>
</dbReference>
<dbReference type="SMR" id="O33020"/>
<dbReference type="STRING" id="272631.gene:17575454"/>
<dbReference type="KEGG" id="mle:ML1613"/>
<dbReference type="PATRIC" id="fig|272631.5.peg.3039"/>
<dbReference type="Leproma" id="ML1613"/>
<dbReference type="eggNOG" id="COG0335">
    <property type="taxonomic scope" value="Bacteria"/>
</dbReference>
<dbReference type="HOGENOM" id="CLU_103507_2_1_11"/>
<dbReference type="OrthoDB" id="9803541at2"/>
<dbReference type="Proteomes" id="UP000000806">
    <property type="component" value="Chromosome"/>
</dbReference>
<dbReference type="GO" id="GO:0022625">
    <property type="term" value="C:cytosolic large ribosomal subunit"/>
    <property type="evidence" value="ECO:0007669"/>
    <property type="project" value="TreeGrafter"/>
</dbReference>
<dbReference type="GO" id="GO:0003735">
    <property type="term" value="F:structural constituent of ribosome"/>
    <property type="evidence" value="ECO:0007669"/>
    <property type="project" value="InterPro"/>
</dbReference>
<dbReference type="GO" id="GO:0006412">
    <property type="term" value="P:translation"/>
    <property type="evidence" value="ECO:0007669"/>
    <property type="project" value="UniProtKB-UniRule"/>
</dbReference>
<dbReference type="FunFam" id="2.30.30.790:FF:000001">
    <property type="entry name" value="50S ribosomal protein L19"/>
    <property type="match status" value="1"/>
</dbReference>
<dbReference type="Gene3D" id="2.30.30.790">
    <property type="match status" value="1"/>
</dbReference>
<dbReference type="HAMAP" id="MF_00402">
    <property type="entry name" value="Ribosomal_bL19"/>
    <property type="match status" value="1"/>
</dbReference>
<dbReference type="InterPro" id="IPR001857">
    <property type="entry name" value="Ribosomal_bL19"/>
</dbReference>
<dbReference type="InterPro" id="IPR018257">
    <property type="entry name" value="Ribosomal_bL19_CS"/>
</dbReference>
<dbReference type="InterPro" id="IPR038657">
    <property type="entry name" value="Ribosomal_bL19_sf"/>
</dbReference>
<dbReference type="InterPro" id="IPR008991">
    <property type="entry name" value="Translation_prot_SH3-like_sf"/>
</dbReference>
<dbReference type="NCBIfam" id="TIGR01024">
    <property type="entry name" value="rplS_bact"/>
    <property type="match status" value="1"/>
</dbReference>
<dbReference type="PANTHER" id="PTHR15680:SF9">
    <property type="entry name" value="LARGE RIBOSOMAL SUBUNIT PROTEIN BL19M"/>
    <property type="match status" value="1"/>
</dbReference>
<dbReference type="PANTHER" id="PTHR15680">
    <property type="entry name" value="RIBOSOMAL PROTEIN L19"/>
    <property type="match status" value="1"/>
</dbReference>
<dbReference type="Pfam" id="PF01245">
    <property type="entry name" value="Ribosomal_L19"/>
    <property type="match status" value="1"/>
</dbReference>
<dbReference type="PIRSF" id="PIRSF002191">
    <property type="entry name" value="Ribosomal_L19"/>
    <property type="match status" value="1"/>
</dbReference>
<dbReference type="PRINTS" id="PR00061">
    <property type="entry name" value="RIBOSOMALL19"/>
</dbReference>
<dbReference type="SUPFAM" id="SSF50104">
    <property type="entry name" value="Translation proteins SH3-like domain"/>
    <property type="match status" value="1"/>
</dbReference>
<dbReference type="PROSITE" id="PS01015">
    <property type="entry name" value="RIBOSOMAL_L19"/>
    <property type="match status" value="1"/>
</dbReference>
<sequence>MNRLDFVDQASLRDDIPAFSPGDTINVHVKVIEGVKERIQVFKGVVIRRQGGGIRETFTVRKESYGVGVERTFPVHSPNIDHIEMVIRGDVRRAKLYYLRELRGKKAKIKEKR</sequence>
<keyword id="KW-1185">Reference proteome</keyword>
<keyword id="KW-0687">Ribonucleoprotein</keyword>
<keyword id="KW-0689">Ribosomal protein</keyword>
<organism>
    <name type="scientific">Mycobacterium leprae (strain TN)</name>
    <dbReference type="NCBI Taxonomy" id="272631"/>
    <lineage>
        <taxon>Bacteria</taxon>
        <taxon>Bacillati</taxon>
        <taxon>Actinomycetota</taxon>
        <taxon>Actinomycetes</taxon>
        <taxon>Mycobacteriales</taxon>
        <taxon>Mycobacteriaceae</taxon>
        <taxon>Mycobacterium</taxon>
    </lineage>
</organism>